<gene>
    <name type="primary">noc4l</name>
    <name type="ORF">zgc:110429</name>
</gene>
<sequence length="525" mass="60726">MAPSGDSNVKEHNNQVSYKKAINTKTDLILQNKKHANDIFDVIEYLQSEKEKEIIFATNACSKIFCELIERGDLFVGELPKEEDLAQGDRSAEEKYHIFMRHRYNSCVELMLENVSHESFQVKETSLCAVMKFVATEGKHPLQNLDWSEHYNFPRELIQALVEHLLSEKEDMSLLISRFQEFMEKDDVRYYVMSSVRYSTATVMERNKKAVIPVFQNNVFNLLTTINIPNQASEMTNFLVQQQSKHDDWKAAKLKEHKRAFEQMWLLFLRYKLPGSMYKKILVILHESILPQMSDPKLMMDFLSAAYDIGGAISLSALNGLFVPIHEHNLDYPDFYKKLYNLLDPSIFHVKYRARFFHLANIFLSSTHLPVYLVAAFVKRLARLSLTAPPTALLILLPFICNLIRRHPSCRVLIHRPSAADEPCDDPYVMEEEDPAQCHALESSLWEIKTLQNHHHPDVSKAATMINEPLSAQEEDISELLELTTFELMERELKGEKKTVPLEFDMATDLLKSSREVLGVHFTLE</sequence>
<protein>
    <recommendedName>
        <fullName>Nucleolar complex protein 4 homolog</fullName>
        <shortName>NOC4 protein homolog</shortName>
    </recommendedName>
    <alternativeName>
        <fullName>NOC4-like protein</fullName>
    </alternativeName>
    <alternativeName>
        <fullName>Nucleolar complex-associated protein 4-like protein</fullName>
    </alternativeName>
</protein>
<accession>Q4VBT2</accession>
<dbReference type="EMBL" id="BC095257">
    <property type="protein sequence ID" value="AAH95257.1"/>
    <property type="molecule type" value="mRNA"/>
</dbReference>
<dbReference type="RefSeq" id="NP_001019568.1">
    <property type="nucleotide sequence ID" value="NM_001024397.1"/>
</dbReference>
<dbReference type="SMR" id="Q4VBT2"/>
<dbReference type="FunCoup" id="Q4VBT2">
    <property type="interactions" value="1359"/>
</dbReference>
<dbReference type="STRING" id="7955.ENSDARP00000067000"/>
<dbReference type="PaxDb" id="7955-ENSDARP00000067000"/>
<dbReference type="GeneID" id="554096"/>
<dbReference type="KEGG" id="dre:554096"/>
<dbReference type="AGR" id="ZFIN:ZDB-GENE-050522-98"/>
<dbReference type="CTD" id="79050"/>
<dbReference type="ZFIN" id="ZDB-GENE-050522-98">
    <property type="gene designation" value="noc4l"/>
</dbReference>
<dbReference type="eggNOG" id="KOG2154">
    <property type="taxonomic scope" value="Eukaryota"/>
</dbReference>
<dbReference type="InParanoid" id="Q4VBT2"/>
<dbReference type="OrthoDB" id="10263185at2759"/>
<dbReference type="PhylomeDB" id="Q4VBT2"/>
<dbReference type="PRO" id="PR:Q4VBT2"/>
<dbReference type="Proteomes" id="UP000000437">
    <property type="component" value="Chromosome 21"/>
</dbReference>
<dbReference type="GO" id="GO:0030692">
    <property type="term" value="C:Noc4p-Nop14p complex"/>
    <property type="evidence" value="ECO:0000318"/>
    <property type="project" value="GO_Central"/>
</dbReference>
<dbReference type="GO" id="GO:0031965">
    <property type="term" value="C:nuclear membrane"/>
    <property type="evidence" value="ECO:0007669"/>
    <property type="project" value="UniProtKB-SubCell"/>
</dbReference>
<dbReference type="GO" id="GO:0005730">
    <property type="term" value="C:nucleolus"/>
    <property type="evidence" value="ECO:0000318"/>
    <property type="project" value="GO_Central"/>
</dbReference>
<dbReference type="GO" id="GO:0032040">
    <property type="term" value="C:small-subunit processome"/>
    <property type="evidence" value="ECO:0000318"/>
    <property type="project" value="GO_Central"/>
</dbReference>
<dbReference type="GO" id="GO:0042254">
    <property type="term" value="P:ribosome biogenesis"/>
    <property type="evidence" value="ECO:0007669"/>
    <property type="project" value="InterPro"/>
</dbReference>
<dbReference type="InterPro" id="IPR005612">
    <property type="entry name" value="CCAAT-binding_factor"/>
</dbReference>
<dbReference type="InterPro" id="IPR027193">
    <property type="entry name" value="Noc4"/>
</dbReference>
<dbReference type="PANTHER" id="PTHR12455">
    <property type="entry name" value="NUCLEOLAR COMPLEX PROTEIN 4"/>
    <property type="match status" value="1"/>
</dbReference>
<dbReference type="PANTHER" id="PTHR12455:SF0">
    <property type="entry name" value="NUCLEOLAR COMPLEX PROTEIN 4 HOMOLOG"/>
    <property type="match status" value="1"/>
</dbReference>
<dbReference type="Pfam" id="PF03914">
    <property type="entry name" value="CBF"/>
    <property type="match status" value="1"/>
</dbReference>
<evidence type="ECO:0000250" key="1">
    <source>
        <dbReference type="UniProtKB" id="Q9BVI4"/>
    </source>
</evidence>
<evidence type="ECO:0000255" key="2"/>
<evidence type="ECO:0000305" key="3"/>
<proteinExistence type="evidence at transcript level"/>
<organism>
    <name type="scientific">Danio rerio</name>
    <name type="common">Zebrafish</name>
    <name type="synonym">Brachydanio rerio</name>
    <dbReference type="NCBI Taxonomy" id="7955"/>
    <lineage>
        <taxon>Eukaryota</taxon>
        <taxon>Metazoa</taxon>
        <taxon>Chordata</taxon>
        <taxon>Craniata</taxon>
        <taxon>Vertebrata</taxon>
        <taxon>Euteleostomi</taxon>
        <taxon>Actinopterygii</taxon>
        <taxon>Neopterygii</taxon>
        <taxon>Teleostei</taxon>
        <taxon>Ostariophysi</taxon>
        <taxon>Cypriniformes</taxon>
        <taxon>Danionidae</taxon>
        <taxon>Danioninae</taxon>
        <taxon>Danio</taxon>
    </lineage>
</organism>
<feature type="chain" id="PRO_0000173488" description="Nucleolar complex protein 4 homolog">
    <location>
        <begin position="1"/>
        <end position="525"/>
    </location>
</feature>
<feature type="transmembrane region" description="Helical" evidence="2">
    <location>
        <begin position="305"/>
        <end position="325"/>
    </location>
</feature>
<feature type="transmembrane region" description="Helical" evidence="2">
    <location>
        <begin position="356"/>
        <end position="376"/>
    </location>
</feature>
<feature type="transmembrane region" description="Helical" evidence="2">
    <location>
        <begin position="384"/>
        <end position="404"/>
    </location>
</feature>
<keyword id="KW-0472">Membrane</keyword>
<keyword id="KW-0539">Nucleus</keyword>
<keyword id="KW-1185">Reference proteome</keyword>
<keyword id="KW-0812">Transmembrane</keyword>
<keyword id="KW-1133">Transmembrane helix</keyword>
<comment type="subcellular location">
    <subcellularLocation>
        <location evidence="1">Nucleus membrane</location>
        <topology evidence="2">Multi-pass membrane protein</topology>
    </subcellularLocation>
    <subcellularLocation>
        <location evidence="1">Nucleus</location>
        <location evidence="1">Nucleolus</location>
    </subcellularLocation>
</comment>
<comment type="similarity">
    <text evidence="3">Belongs to the CBF/MAK21 family.</text>
</comment>
<name>NOC4L_DANRE</name>
<reference key="1">
    <citation type="submission" date="2005-05" db="EMBL/GenBank/DDBJ databases">
        <authorList>
            <consortium name="NIH - Zebrafish Gene Collection (ZGC) project"/>
        </authorList>
    </citation>
    <scope>NUCLEOTIDE SEQUENCE [LARGE SCALE MRNA]</scope>
    <source>
        <tissue>Embryo</tissue>
    </source>
</reference>